<accession>Q5ZWE8</accession>
<reference key="1">
    <citation type="journal article" date="2004" name="Science">
        <title>The genomic sequence of the accidental pathogen Legionella pneumophila.</title>
        <authorList>
            <person name="Chien M."/>
            <person name="Morozova I."/>
            <person name="Shi S."/>
            <person name="Sheng H."/>
            <person name="Chen J."/>
            <person name="Gomez S.M."/>
            <person name="Asamani G."/>
            <person name="Hill K."/>
            <person name="Nuara J."/>
            <person name="Feder M."/>
            <person name="Rineer J."/>
            <person name="Greenberg J.J."/>
            <person name="Steshenko V."/>
            <person name="Park S.H."/>
            <person name="Zhao B."/>
            <person name="Teplitskaya E."/>
            <person name="Edwards J.R."/>
            <person name="Pampou S."/>
            <person name="Georghiou A."/>
            <person name="Chou I.-C."/>
            <person name="Iannuccilli W."/>
            <person name="Ulz M.E."/>
            <person name="Kim D.H."/>
            <person name="Geringer-Sameth A."/>
            <person name="Goldsberry C."/>
            <person name="Morozov P."/>
            <person name="Fischer S.G."/>
            <person name="Segal G."/>
            <person name="Qu X."/>
            <person name="Rzhetsky A."/>
            <person name="Zhang P."/>
            <person name="Cayanis E."/>
            <person name="De Jong P.J."/>
            <person name="Ju J."/>
            <person name="Kalachikov S."/>
            <person name="Shuman H.A."/>
            <person name="Russo J.J."/>
        </authorList>
    </citation>
    <scope>NUCLEOTIDE SEQUENCE [LARGE SCALE GENOMIC DNA]</scope>
    <source>
        <strain>Philadelphia 1 / ATCC 33152 / DSM 7513</strain>
    </source>
</reference>
<reference key="2">
    <citation type="journal article" date="2017" name="Nat. Commun.">
        <title>Legionella effector Lpg1137 shuts down ER-mitochondria communication through cleavage of syntaxin 17.</title>
        <authorList>
            <person name="Arasaki K."/>
            <person name="Mikami Y."/>
            <person name="Shames S.R."/>
            <person name="Inoue H."/>
            <person name="Wakana Y."/>
            <person name="Tagaya M."/>
        </authorList>
    </citation>
    <scope>FUNCTION</scope>
    <scope>SUBCELLULAR LOCATION</scope>
    <scope>ACTIVE SITE</scope>
    <scope>MUTAGENESIS OF SER-68 AND SER-134</scope>
</reference>
<reference key="3">
    <citation type="journal article" date="2017" name="PeerJ">
        <title>The Legionella pneumophila effector Lpg1137 is a homologue of mitochondrial SLC25 carrier proteins, not of known serine proteases.</title>
        <authorList>
            <person name="Gradowski M."/>
            <person name="Pawlowski K."/>
        </authorList>
    </citation>
    <scope>CAUTION</scope>
</reference>
<gene>
    <name evidence="5" type="ordered locus">lpg1137</name>
</gene>
<proteinExistence type="evidence at protein level"/>
<protein>
    <recommendedName>
        <fullName evidence="2">Serine protease Lpg1137</fullName>
        <ecNumber evidence="1">3.4.22.-</ecNumber>
    </recommendedName>
</protein>
<keyword id="KW-1043">Host membrane</keyword>
<keyword id="KW-1045">Host mitochondrion</keyword>
<keyword id="KW-0378">Hydrolase</keyword>
<keyword id="KW-0472">Membrane</keyword>
<keyword id="KW-0645">Protease</keyword>
<keyword id="KW-1185">Reference proteome</keyword>
<keyword id="KW-0964">Secreted</keyword>
<keyword id="KW-0720">Serine protease</keyword>
<keyword id="KW-0843">Virulence</keyword>
<feature type="chain" id="PRO_0000454157" description="Serine protease Lpg1137">
    <location>
        <begin position="1"/>
        <end position="322"/>
    </location>
</feature>
<feature type="active site" evidence="3">
    <location>
        <position position="68"/>
    </location>
</feature>
<feature type="mutagenesis site" description="Abolished ability to catalyze degradation of host STX17." evidence="1">
    <original>S</original>
    <variation>A</variation>
    <location>
        <position position="68"/>
    </location>
</feature>
<feature type="mutagenesis site" description="Does not affect ability to catalyze degradation of host STX17." evidence="1">
    <original>S</original>
    <variation>A</variation>
    <location>
        <position position="134"/>
    </location>
</feature>
<name>L1137_LEGPH</name>
<organism>
    <name type="scientific">Legionella pneumophila subsp. pneumophila (strain Philadelphia 1 / ATCC 33152 / DSM 7513)</name>
    <dbReference type="NCBI Taxonomy" id="272624"/>
    <lineage>
        <taxon>Bacteria</taxon>
        <taxon>Pseudomonadati</taxon>
        <taxon>Pseudomonadota</taxon>
        <taxon>Gammaproteobacteria</taxon>
        <taxon>Legionellales</taxon>
        <taxon>Legionellaceae</taxon>
        <taxon>Legionella</taxon>
    </lineage>
</organism>
<dbReference type="EC" id="3.4.22.-" evidence="1"/>
<dbReference type="EMBL" id="AE017354">
    <property type="protein sequence ID" value="AAU27223.1"/>
    <property type="molecule type" value="Genomic_DNA"/>
</dbReference>
<dbReference type="RefSeq" id="WP_010946871.1">
    <property type="nucleotide sequence ID" value="NC_002942.5"/>
</dbReference>
<dbReference type="RefSeq" id="YP_095170.1">
    <property type="nucleotide sequence ID" value="NC_002942.5"/>
</dbReference>
<dbReference type="STRING" id="272624.lpg1137"/>
<dbReference type="PaxDb" id="272624-lpg1137"/>
<dbReference type="KEGG" id="lpn:lpg1137"/>
<dbReference type="PATRIC" id="fig|272624.6.peg.1195"/>
<dbReference type="eggNOG" id="ENOG5031DNH">
    <property type="taxonomic scope" value="Bacteria"/>
</dbReference>
<dbReference type="HOGENOM" id="CLU_876589_0_0_6"/>
<dbReference type="OrthoDB" id="5637673at2"/>
<dbReference type="Proteomes" id="UP000000609">
    <property type="component" value="Chromosome"/>
</dbReference>
<dbReference type="GO" id="GO:0005576">
    <property type="term" value="C:extracellular region"/>
    <property type="evidence" value="ECO:0007669"/>
    <property type="project" value="UniProtKB-SubCell"/>
</dbReference>
<dbReference type="GO" id="GO:0044191">
    <property type="term" value="C:host cell mitochondrial membrane"/>
    <property type="evidence" value="ECO:0007669"/>
    <property type="project" value="UniProtKB-SubCell"/>
</dbReference>
<dbReference type="GO" id="GO:0016020">
    <property type="term" value="C:membrane"/>
    <property type="evidence" value="ECO:0007669"/>
    <property type="project" value="UniProtKB-KW"/>
</dbReference>
<dbReference type="GO" id="GO:0008236">
    <property type="term" value="F:serine-type peptidase activity"/>
    <property type="evidence" value="ECO:0000314"/>
    <property type="project" value="UniProtKB"/>
</dbReference>
<dbReference type="GO" id="GO:0006508">
    <property type="term" value="P:proteolysis"/>
    <property type="evidence" value="ECO:0007669"/>
    <property type="project" value="UniProtKB-KW"/>
</dbReference>
<dbReference type="InterPro" id="IPR041000">
    <property type="entry name" value="Serine_protease"/>
</dbReference>
<dbReference type="Pfam" id="PF18405">
    <property type="entry name" value="SLC25_like"/>
    <property type="match status" value="1"/>
</dbReference>
<comment type="function">
    <text evidence="1">Serine protease effector that inhibits host cell autophagy by targeting SNX17 (PubMed:28504273). Localizes to the host endoplasmic reticulum-mitochondria contact site and catalyzes degradation of host SNX17, thereby impairing endoplasmic reticulum-mitochondria communication, leading to inhibit autophagy as well as staurosporine-induced apoptosis (PubMed:28504273).</text>
</comment>
<comment type="subcellular location">
    <subcellularLocation>
        <location evidence="3">Secreted</location>
    </subcellularLocation>
    <subcellularLocation>
        <location evidence="1">Host mitochondrion membrane</location>
    </subcellularLocation>
    <text evidence="1">Localizes to the host mitochondria-associated endoplasmic reticulum membrane (MAM).</text>
</comment>
<comment type="caution">
    <text evidence="4">According to a report based on bioinformatics studies, this protein is not related to serine proteases but is homologous to mitochondrial SLC25 carrier proteins. Additional experimental evidences are needed to confirm this prediction.</text>
</comment>
<evidence type="ECO:0000269" key="1">
    <source>
    </source>
</evidence>
<evidence type="ECO:0000305" key="2"/>
<evidence type="ECO:0000305" key="3">
    <source>
    </source>
</evidence>
<evidence type="ECO:0000305" key="4">
    <source>
    </source>
</evidence>
<evidence type="ECO:0000312" key="5">
    <source>
        <dbReference type="EMBL" id="AAU27223.1"/>
    </source>
</evidence>
<sequence>MIQRGFTMQERREKQGNNSPYLLTPYEMANLVFKTGAISFTVSAGTQPFQYLLNKLQFSQSGTPSGLSGGLFRGMYRGFLPYAIAGQKRGAVAVTHKQTNKVTEEEEFEAPFRQRWWGTIFFSQADLLVSNGLSGKARLQNVGVINAENFKWSLSNFWKLTSVNWGSRSFAGGVNFALIGFAGDYVSSFYKFDKDLYNKILGGATSGVIATLFTTAPNAYADSKLLQTKVAENNRLITVSPYTMFGQMKSHVKAVGLKEAFMTFFKVSYLQQVAVRAPQAAITFALIFGMDEYMGPQPLKKVWPGRVEELESENPSPSPTKK</sequence>